<gene>
    <name type="primary">Nms</name>
</gene>
<organism>
    <name type="scientific">Mus musculus</name>
    <name type="common">Mouse</name>
    <dbReference type="NCBI Taxonomy" id="10090"/>
    <lineage>
        <taxon>Eukaryota</taxon>
        <taxon>Metazoa</taxon>
        <taxon>Chordata</taxon>
        <taxon>Craniata</taxon>
        <taxon>Vertebrata</taxon>
        <taxon>Euteleostomi</taxon>
        <taxon>Mammalia</taxon>
        <taxon>Eutheria</taxon>
        <taxon>Euarchontoglires</taxon>
        <taxon>Glires</taxon>
        <taxon>Rodentia</taxon>
        <taxon>Myomorpha</taxon>
        <taxon>Muroidea</taxon>
        <taxon>Muridae</taxon>
        <taxon>Murinae</taxon>
        <taxon>Mus</taxon>
        <taxon>Mus</taxon>
    </lineage>
</organism>
<proteinExistence type="evidence at transcript level"/>
<evidence type="ECO:0000250" key="1"/>
<evidence type="ECO:0000255" key="2"/>
<evidence type="ECO:0000305" key="3"/>
<accession>Q5H8A1</accession>
<accession>B2RSM4</accession>
<protein>
    <recommendedName>
        <fullName>Neuromedin-S</fullName>
    </recommendedName>
</protein>
<keyword id="KW-0027">Amidation</keyword>
<keyword id="KW-0165">Cleavage on pair of basic residues</keyword>
<keyword id="KW-0527">Neuropeptide</keyword>
<keyword id="KW-1185">Reference proteome</keyword>
<keyword id="KW-0964">Secreted</keyword>
<keyword id="KW-0732">Signal</keyword>
<comment type="function">
    <text evidence="1">Implicated in the regulation of circadian rhythms through autocrine and/or paracrine actions.</text>
</comment>
<comment type="subcellular location">
    <subcellularLocation>
        <location evidence="1">Secreted</location>
    </subcellularLocation>
</comment>
<comment type="similarity">
    <text evidence="3">Belongs to the NmU family.</text>
</comment>
<dbReference type="EMBL" id="AB164466">
    <property type="protein sequence ID" value="BAD89026.1"/>
    <property type="molecule type" value="mRNA"/>
</dbReference>
<dbReference type="EMBL" id="BC138922">
    <property type="protein sequence ID" value="AAI38923.1"/>
    <property type="molecule type" value="mRNA"/>
</dbReference>
<dbReference type="CCDS" id="CCDS14902.1"/>
<dbReference type="RefSeq" id="NP_001011684.3">
    <property type="nucleotide sequence ID" value="NM_001011684.2"/>
</dbReference>
<dbReference type="BioGRID" id="241148">
    <property type="interactions" value="1"/>
</dbReference>
<dbReference type="FunCoup" id="Q5H8A1">
    <property type="interactions" value="373"/>
</dbReference>
<dbReference type="STRING" id="10090.ENSMUSP00000085346"/>
<dbReference type="PaxDb" id="10090-ENSMUSP00000085346"/>
<dbReference type="Antibodypedia" id="48800">
    <property type="antibodies" value="112 antibodies from 22 providers"/>
</dbReference>
<dbReference type="DNASU" id="433292"/>
<dbReference type="Ensembl" id="ENSMUST00000088029.8">
    <property type="protein sequence ID" value="ENSMUSP00000085346.2"/>
    <property type="gene ID" value="ENSMUSG00000067604.9"/>
</dbReference>
<dbReference type="GeneID" id="433292"/>
<dbReference type="KEGG" id="mmu:433292"/>
<dbReference type="UCSC" id="uc007atb.1">
    <property type="organism name" value="mouse"/>
</dbReference>
<dbReference type="AGR" id="MGI:3583618"/>
<dbReference type="CTD" id="129521"/>
<dbReference type="MGI" id="MGI:3583618">
    <property type="gene designation" value="Nms"/>
</dbReference>
<dbReference type="VEuPathDB" id="HostDB:ENSMUSG00000067604"/>
<dbReference type="eggNOG" id="ENOG502SB16">
    <property type="taxonomic scope" value="Eukaryota"/>
</dbReference>
<dbReference type="GeneTree" id="ENSGT00510000049213"/>
<dbReference type="InParanoid" id="Q5H8A1"/>
<dbReference type="OMA" id="FCMLPIP"/>
<dbReference type="OrthoDB" id="9940794at2759"/>
<dbReference type="PhylomeDB" id="Q5H8A1"/>
<dbReference type="TreeFam" id="TF338319"/>
<dbReference type="Reactome" id="R-MMU-375276">
    <property type="pathway name" value="Peptide ligand-binding receptors"/>
</dbReference>
<dbReference type="Reactome" id="R-MMU-416476">
    <property type="pathway name" value="G alpha (q) signalling events"/>
</dbReference>
<dbReference type="Reactome" id="R-MMU-418594">
    <property type="pathway name" value="G alpha (i) signalling events"/>
</dbReference>
<dbReference type="BioGRID-ORCS" id="433292">
    <property type="hits" value="1 hit in 78 CRISPR screens"/>
</dbReference>
<dbReference type="PRO" id="PR:Q5H8A1"/>
<dbReference type="Proteomes" id="UP000000589">
    <property type="component" value="Chromosome 1"/>
</dbReference>
<dbReference type="RNAct" id="Q5H8A1">
    <property type="molecule type" value="protein"/>
</dbReference>
<dbReference type="Bgee" id="ENSMUSG00000067604">
    <property type="expression patterns" value="Expressed in neural tube and 3 other cell types or tissues"/>
</dbReference>
<dbReference type="ExpressionAtlas" id="Q5H8A1">
    <property type="expression patterns" value="baseline and differential"/>
</dbReference>
<dbReference type="GO" id="GO:0005576">
    <property type="term" value="C:extracellular region"/>
    <property type="evidence" value="ECO:0007669"/>
    <property type="project" value="UniProtKB-SubCell"/>
</dbReference>
<dbReference type="GO" id="GO:0001664">
    <property type="term" value="F:G protein-coupled receptor binding"/>
    <property type="evidence" value="ECO:0000266"/>
    <property type="project" value="MGI"/>
</dbReference>
<dbReference type="GO" id="GO:0045475">
    <property type="term" value="P:locomotor rhythm"/>
    <property type="evidence" value="ECO:0000266"/>
    <property type="project" value="MGI"/>
</dbReference>
<dbReference type="GO" id="GO:0007218">
    <property type="term" value="P:neuropeptide signaling pathway"/>
    <property type="evidence" value="ECO:0000266"/>
    <property type="project" value="MGI"/>
</dbReference>
<dbReference type="InterPro" id="IPR018070">
    <property type="entry name" value="Neuromedin-U_amidation-site"/>
</dbReference>
<dbReference type="InterPro" id="IPR043253">
    <property type="entry name" value="NmS"/>
</dbReference>
<dbReference type="PANTHER" id="PTHR32414">
    <property type="entry name" value="NEUROMEDIN-S"/>
    <property type="match status" value="1"/>
</dbReference>
<dbReference type="PANTHER" id="PTHR32414:SF2">
    <property type="entry name" value="NEUROMEDIN-S"/>
    <property type="match status" value="1"/>
</dbReference>
<dbReference type="PROSITE" id="PS00967">
    <property type="entry name" value="NMU"/>
    <property type="match status" value="1"/>
</dbReference>
<name>NMS_MOUSE</name>
<sequence>MKHPLPHYSPILFIYCFCMLQIPSSGASPPLADSPDGLDIVDPERLAYFLKQREIHSNQPKENQDVYKRFLFHYSRTRKPTHPVSAEFAPVHPLMRLAAKLASRRMKRLPRLLRLDSRMATVDFPKKDPTTSLGRPFFLFRPRNGRYTDNNFQ</sequence>
<reference key="1">
    <citation type="journal article" date="2005" name="EMBO J.">
        <title>Identification of neuromedin S and its possible role in the mammalian circadian oscillator system.</title>
        <authorList>
            <person name="Mori K."/>
            <person name="Miyazato M."/>
            <person name="Ida T."/>
            <person name="Murakami N."/>
            <person name="Serino R."/>
            <person name="Ueta Y."/>
            <person name="Kojima M."/>
            <person name="Kangawa K."/>
        </authorList>
    </citation>
    <scope>NUCLEOTIDE SEQUENCE [MRNA]</scope>
    <source>
        <tissue>Brain</tissue>
    </source>
</reference>
<reference key="2">
    <citation type="journal article" date="2004" name="Genome Res.">
        <title>The status, quality, and expansion of the NIH full-length cDNA project: the Mammalian Gene Collection (MGC).</title>
        <authorList>
            <consortium name="The MGC Project Team"/>
        </authorList>
    </citation>
    <scope>NUCLEOTIDE SEQUENCE [LARGE SCALE MRNA]</scope>
    <source>
        <tissue>Brain</tissue>
    </source>
</reference>
<feature type="signal peptide" evidence="2">
    <location>
        <begin position="1"/>
        <end position="26"/>
    </location>
</feature>
<feature type="propeptide" id="PRO_0000262485">
    <location>
        <begin position="27"/>
        <end position="69"/>
    </location>
</feature>
<feature type="propeptide" id="PRO_0000262486">
    <location>
        <begin position="70"/>
        <end position="105"/>
    </location>
</feature>
<feature type="propeptide" id="PRO_0000262487">
    <location>
        <begin position="106"/>
        <end position="108"/>
    </location>
</feature>
<feature type="peptide" id="PRO_0000262488" description="Neuromedin-S">
    <location>
        <begin position="109"/>
        <end position="144"/>
    </location>
</feature>
<feature type="propeptide" id="PRO_0000262489">
    <location>
        <begin position="147"/>
        <end position="153"/>
    </location>
</feature>
<feature type="modified residue" description="Asparagine amide" evidence="1">
    <location>
        <position position="144"/>
    </location>
</feature>